<proteinExistence type="inferred from homology"/>
<reference key="1">
    <citation type="journal article" date="2006" name="PLoS Genet.">
        <title>The complete genome sequence and comparative genome analysis of the high pathogenicity Yersinia enterocolitica strain 8081.</title>
        <authorList>
            <person name="Thomson N.R."/>
            <person name="Howard S."/>
            <person name="Wren B.W."/>
            <person name="Holden M.T.G."/>
            <person name="Crossman L."/>
            <person name="Challis G.L."/>
            <person name="Churcher C."/>
            <person name="Mungall K."/>
            <person name="Brooks K."/>
            <person name="Chillingworth T."/>
            <person name="Feltwell T."/>
            <person name="Abdellah Z."/>
            <person name="Hauser H."/>
            <person name="Jagels K."/>
            <person name="Maddison M."/>
            <person name="Moule S."/>
            <person name="Sanders M."/>
            <person name="Whitehead S."/>
            <person name="Quail M.A."/>
            <person name="Dougan G."/>
            <person name="Parkhill J."/>
            <person name="Prentice M.B."/>
        </authorList>
    </citation>
    <scope>NUCLEOTIDE SEQUENCE [LARGE SCALE GENOMIC DNA]</scope>
    <source>
        <strain>NCTC 13174 / 8081</strain>
    </source>
</reference>
<accession>A1JMW4</accession>
<evidence type="ECO:0000255" key="1">
    <source>
        <dbReference type="HAMAP-Rule" id="MF_00833"/>
    </source>
</evidence>
<gene>
    <name evidence="1" type="primary">rutF</name>
    <name type="synonym">hpaC</name>
    <name type="ordered locus">YE1945</name>
</gene>
<feature type="chain" id="PRO_0000403050" description="FMN reductase (NADH) RutF">
    <location>
        <begin position="1"/>
        <end position="182"/>
    </location>
</feature>
<dbReference type="EC" id="1.5.1.42" evidence="1"/>
<dbReference type="EMBL" id="AM286415">
    <property type="protein sequence ID" value="CAL12024.1"/>
    <property type="molecule type" value="Genomic_DNA"/>
</dbReference>
<dbReference type="RefSeq" id="WP_011816246.1">
    <property type="nucleotide sequence ID" value="NC_008800.1"/>
</dbReference>
<dbReference type="RefSeq" id="YP_001006200.1">
    <property type="nucleotide sequence ID" value="NC_008800.1"/>
</dbReference>
<dbReference type="SMR" id="A1JMW4"/>
<dbReference type="KEGG" id="yen:YE1945"/>
<dbReference type="PATRIC" id="fig|393305.7.peg.2102"/>
<dbReference type="eggNOG" id="COG1853">
    <property type="taxonomic scope" value="Bacteria"/>
</dbReference>
<dbReference type="HOGENOM" id="CLU_059021_2_2_6"/>
<dbReference type="OrthoDB" id="6401628at2"/>
<dbReference type="Proteomes" id="UP000000642">
    <property type="component" value="Chromosome"/>
</dbReference>
<dbReference type="GO" id="GO:0010181">
    <property type="term" value="F:FMN binding"/>
    <property type="evidence" value="ECO:0007669"/>
    <property type="project" value="InterPro"/>
</dbReference>
<dbReference type="GO" id="GO:0052874">
    <property type="term" value="F:FMN reductase (NADH) activity"/>
    <property type="evidence" value="ECO:0007669"/>
    <property type="project" value="UniProtKB-EC"/>
</dbReference>
<dbReference type="GO" id="GO:0008752">
    <property type="term" value="F:FMN reductase [NAD(P)H] activity"/>
    <property type="evidence" value="ECO:0007669"/>
    <property type="project" value="InterPro"/>
</dbReference>
<dbReference type="GO" id="GO:0042602">
    <property type="term" value="F:riboflavin reductase (NADPH) activity"/>
    <property type="evidence" value="ECO:0007669"/>
    <property type="project" value="UniProtKB-UniRule"/>
</dbReference>
<dbReference type="GO" id="GO:0019740">
    <property type="term" value="P:nitrogen utilization"/>
    <property type="evidence" value="ECO:0007669"/>
    <property type="project" value="UniProtKB-UniRule"/>
</dbReference>
<dbReference type="GO" id="GO:0006212">
    <property type="term" value="P:uracil catabolic process"/>
    <property type="evidence" value="ECO:0007669"/>
    <property type="project" value="UniProtKB-UniRule"/>
</dbReference>
<dbReference type="FunFam" id="2.30.110.10:FF:000002">
    <property type="entry name" value="FMN reductase (NADH) RutF"/>
    <property type="match status" value="1"/>
</dbReference>
<dbReference type="Gene3D" id="2.30.110.10">
    <property type="entry name" value="Electron Transport, Fmn-binding Protein, Chain A"/>
    <property type="match status" value="1"/>
</dbReference>
<dbReference type="HAMAP" id="MF_00833">
    <property type="entry name" value="RutF"/>
    <property type="match status" value="1"/>
</dbReference>
<dbReference type="InterPro" id="IPR002563">
    <property type="entry name" value="Flavin_Rdtase-like_dom"/>
</dbReference>
<dbReference type="InterPro" id="IPR050268">
    <property type="entry name" value="NADH-dep_flavin_reductase"/>
</dbReference>
<dbReference type="InterPro" id="IPR019917">
    <property type="entry name" value="RutF"/>
</dbReference>
<dbReference type="InterPro" id="IPR012349">
    <property type="entry name" value="Split_barrel_FMN-bd"/>
</dbReference>
<dbReference type="NCBIfam" id="TIGR03615">
    <property type="entry name" value="RutF"/>
    <property type="match status" value="1"/>
</dbReference>
<dbReference type="PANTHER" id="PTHR30466">
    <property type="entry name" value="FLAVIN REDUCTASE"/>
    <property type="match status" value="1"/>
</dbReference>
<dbReference type="PANTHER" id="PTHR30466:SF1">
    <property type="entry name" value="FMN REDUCTASE (NADH) RUTF"/>
    <property type="match status" value="1"/>
</dbReference>
<dbReference type="Pfam" id="PF01613">
    <property type="entry name" value="Flavin_Reduct"/>
    <property type="match status" value="1"/>
</dbReference>
<dbReference type="SMART" id="SM00903">
    <property type="entry name" value="Flavin_Reduct"/>
    <property type="match status" value="1"/>
</dbReference>
<dbReference type="SUPFAM" id="SSF50475">
    <property type="entry name" value="FMN-binding split barrel"/>
    <property type="match status" value="1"/>
</dbReference>
<name>RUTF_YERE8</name>
<sequence length="182" mass="19529">MQTQSLPTDSLPASSALRSVAVDKQDFRDAMARLGSAVNIITTDGPAGRAGFTASAVCSVTDTPPTLLVCLNRSASVYSVFQQNQTLCVNTLCAEHESLSNLFGGKTPMEMRFSAARWSTLVTGCPVLSGAVASFDCHITQVISVGTHDILFCQAAAVIHNDDQHGLAYFDRCYHPLMRQSR</sequence>
<protein>
    <recommendedName>
        <fullName evidence="1">FMN reductase (NADH) RutF</fullName>
        <ecNumber evidence="1">1.5.1.42</ecNumber>
    </recommendedName>
    <alternativeName>
        <fullName evidence="1">FMN reductase</fullName>
    </alternativeName>
    <alternativeName>
        <fullName evidence="1">NADH-flavin reductase RutF</fullName>
    </alternativeName>
    <alternativeName>
        <fullName evidence="1">NADH:flavin oxidoreductase</fullName>
    </alternativeName>
</protein>
<keyword id="KW-0285">Flavoprotein</keyword>
<keyword id="KW-0288">FMN</keyword>
<keyword id="KW-0520">NAD</keyword>
<keyword id="KW-0560">Oxidoreductase</keyword>
<comment type="function">
    <text evidence="1">Catalyzes the reduction of FMN to FMNH2 which is used to reduce pyrimidine by RutA via the Rut pathway.</text>
</comment>
<comment type="catalytic activity">
    <reaction evidence="1">
        <text>FMNH2 + NAD(+) = FMN + NADH + 2 H(+)</text>
        <dbReference type="Rhea" id="RHEA:21620"/>
        <dbReference type="ChEBI" id="CHEBI:15378"/>
        <dbReference type="ChEBI" id="CHEBI:57540"/>
        <dbReference type="ChEBI" id="CHEBI:57618"/>
        <dbReference type="ChEBI" id="CHEBI:57945"/>
        <dbReference type="ChEBI" id="CHEBI:58210"/>
        <dbReference type="EC" id="1.5.1.42"/>
    </reaction>
</comment>
<comment type="similarity">
    <text evidence="1">Belongs to the non-flavoprotein flavin reductase family. RutF subfamily.</text>
</comment>
<organism>
    <name type="scientific">Yersinia enterocolitica serotype O:8 / biotype 1B (strain NCTC 13174 / 8081)</name>
    <dbReference type="NCBI Taxonomy" id="393305"/>
    <lineage>
        <taxon>Bacteria</taxon>
        <taxon>Pseudomonadati</taxon>
        <taxon>Pseudomonadota</taxon>
        <taxon>Gammaproteobacteria</taxon>
        <taxon>Enterobacterales</taxon>
        <taxon>Yersiniaceae</taxon>
        <taxon>Yersinia</taxon>
    </lineage>
</organism>